<organism>
    <name type="scientific">Listeria monocytogenes serotype 4b (strain CLIP80459)</name>
    <dbReference type="NCBI Taxonomy" id="568819"/>
    <lineage>
        <taxon>Bacteria</taxon>
        <taxon>Bacillati</taxon>
        <taxon>Bacillota</taxon>
        <taxon>Bacilli</taxon>
        <taxon>Bacillales</taxon>
        <taxon>Listeriaceae</taxon>
        <taxon>Listeria</taxon>
    </lineage>
</organism>
<protein>
    <recommendedName>
        <fullName evidence="1">Adenine phosphoribosyltransferase</fullName>
        <shortName evidence="1">APRT</shortName>
        <ecNumber evidence="1">2.4.2.7</ecNumber>
    </recommendedName>
</protein>
<name>APT_LISMC</name>
<proteinExistence type="inferred from homology"/>
<sequence length="173" mass="19182">MEIKDLQDYVAIVNDWPKKGIVFKDITPLMNDGEAYRFATDKIVEYAKELKIDIIVGPEARGFIIGCPVAYALGIGFAPVRKPGKLPRETIEMEYDLEYGTNKLSMHSDAIKPGQRVLITDDLLATGGTIEATIKLVEELGGIVAGCAFLIELKELEGHKKLNGYDRLILMQL</sequence>
<accession>C1KVH1</accession>
<gene>
    <name evidence="1" type="primary">apt</name>
    <name type="ordered locus">Lm4b_01534</name>
</gene>
<comment type="function">
    <text evidence="1">Catalyzes a salvage reaction resulting in the formation of AMP, that is energically less costly than de novo synthesis.</text>
</comment>
<comment type="catalytic activity">
    <reaction evidence="1">
        <text>AMP + diphosphate = 5-phospho-alpha-D-ribose 1-diphosphate + adenine</text>
        <dbReference type="Rhea" id="RHEA:16609"/>
        <dbReference type="ChEBI" id="CHEBI:16708"/>
        <dbReference type="ChEBI" id="CHEBI:33019"/>
        <dbReference type="ChEBI" id="CHEBI:58017"/>
        <dbReference type="ChEBI" id="CHEBI:456215"/>
        <dbReference type="EC" id="2.4.2.7"/>
    </reaction>
</comment>
<comment type="pathway">
    <text evidence="1">Purine metabolism; AMP biosynthesis via salvage pathway; AMP from adenine: step 1/1.</text>
</comment>
<comment type="subunit">
    <text evidence="1">Homodimer.</text>
</comment>
<comment type="subcellular location">
    <subcellularLocation>
        <location evidence="1">Cytoplasm</location>
    </subcellularLocation>
</comment>
<comment type="similarity">
    <text evidence="1">Belongs to the purine/pyrimidine phosphoribosyltransferase family.</text>
</comment>
<evidence type="ECO:0000255" key="1">
    <source>
        <dbReference type="HAMAP-Rule" id="MF_00004"/>
    </source>
</evidence>
<dbReference type="EC" id="2.4.2.7" evidence="1"/>
<dbReference type="EMBL" id="FM242711">
    <property type="protein sequence ID" value="CAS05296.1"/>
    <property type="molecule type" value="Genomic_DNA"/>
</dbReference>
<dbReference type="RefSeq" id="WP_003727399.1">
    <property type="nucleotide sequence ID" value="NC_012488.1"/>
</dbReference>
<dbReference type="SMR" id="C1KVH1"/>
<dbReference type="KEGG" id="lmc:Lm4b_01534"/>
<dbReference type="HOGENOM" id="CLU_063339_3_0_9"/>
<dbReference type="UniPathway" id="UPA00588">
    <property type="reaction ID" value="UER00646"/>
</dbReference>
<dbReference type="GO" id="GO:0005737">
    <property type="term" value="C:cytoplasm"/>
    <property type="evidence" value="ECO:0007669"/>
    <property type="project" value="UniProtKB-SubCell"/>
</dbReference>
<dbReference type="GO" id="GO:0002055">
    <property type="term" value="F:adenine binding"/>
    <property type="evidence" value="ECO:0007669"/>
    <property type="project" value="TreeGrafter"/>
</dbReference>
<dbReference type="GO" id="GO:0003999">
    <property type="term" value="F:adenine phosphoribosyltransferase activity"/>
    <property type="evidence" value="ECO:0007669"/>
    <property type="project" value="UniProtKB-UniRule"/>
</dbReference>
<dbReference type="GO" id="GO:0016208">
    <property type="term" value="F:AMP binding"/>
    <property type="evidence" value="ECO:0007669"/>
    <property type="project" value="TreeGrafter"/>
</dbReference>
<dbReference type="GO" id="GO:0006168">
    <property type="term" value="P:adenine salvage"/>
    <property type="evidence" value="ECO:0007669"/>
    <property type="project" value="InterPro"/>
</dbReference>
<dbReference type="GO" id="GO:0044209">
    <property type="term" value="P:AMP salvage"/>
    <property type="evidence" value="ECO:0007669"/>
    <property type="project" value="UniProtKB-UniRule"/>
</dbReference>
<dbReference type="GO" id="GO:0006166">
    <property type="term" value="P:purine ribonucleoside salvage"/>
    <property type="evidence" value="ECO:0007669"/>
    <property type="project" value="UniProtKB-KW"/>
</dbReference>
<dbReference type="CDD" id="cd06223">
    <property type="entry name" value="PRTases_typeI"/>
    <property type="match status" value="1"/>
</dbReference>
<dbReference type="FunFam" id="3.40.50.2020:FF:000004">
    <property type="entry name" value="Adenine phosphoribosyltransferase"/>
    <property type="match status" value="1"/>
</dbReference>
<dbReference type="Gene3D" id="3.40.50.2020">
    <property type="match status" value="1"/>
</dbReference>
<dbReference type="HAMAP" id="MF_00004">
    <property type="entry name" value="Aden_phosphoribosyltr"/>
    <property type="match status" value="1"/>
</dbReference>
<dbReference type="InterPro" id="IPR005764">
    <property type="entry name" value="Ade_phspho_trans"/>
</dbReference>
<dbReference type="InterPro" id="IPR000836">
    <property type="entry name" value="PRibTrfase_dom"/>
</dbReference>
<dbReference type="InterPro" id="IPR029057">
    <property type="entry name" value="PRTase-like"/>
</dbReference>
<dbReference type="InterPro" id="IPR050054">
    <property type="entry name" value="UPRTase/APRTase"/>
</dbReference>
<dbReference type="NCBIfam" id="TIGR01090">
    <property type="entry name" value="apt"/>
    <property type="match status" value="1"/>
</dbReference>
<dbReference type="NCBIfam" id="NF002633">
    <property type="entry name" value="PRK02304.1-2"/>
    <property type="match status" value="1"/>
</dbReference>
<dbReference type="NCBIfam" id="NF002634">
    <property type="entry name" value="PRK02304.1-3"/>
    <property type="match status" value="1"/>
</dbReference>
<dbReference type="NCBIfam" id="NF002636">
    <property type="entry name" value="PRK02304.1-5"/>
    <property type="match status" value="1"/>
</dbReference>
<dbReference type="PANTHER" id="PTHR32315">
    <property type="entry name" value="ADENINE PHOSPHORIBOSYLTRANSFERASE"/>
    <property type="match status" value="1"/>
</dbReference>
<dbReference type="PANTHER" id="PTHR32315:SF3">
    <property type="entry name" value="ADENINE PHOSPHORIBOSYLTRANSFERASE"/>
    <property type="match status" value="1"/>
</dbReference>
<dbReference type="Pfam" id="PF00156">
    <property type="entry name" value="Pribosyltran"/>
    <property type="match status" value="1"/>
</dbReference>
<dbReference type="SUPFAM" id="SSF53271">
    <property type="entry name" value="PRTase-like"/>
    <property type="match status" value="1"/>
</dbReference>
<reference key="1">
    <citation type="journal article" date="2012" name="BMC Genomics">
        <title>Comparative genomics and transcriptomics of lineages I, II, and III strains of Listeria monocytogenes.</title>
        <authorList>
            <person name="Hain T."/>
            <person name="Ghai R."/>
            <person name="Billion A."/>
            <person name="Kuenne C.T."/>
            <person name="Steinweg C."/>
            <person name="Izar B."/>
            <person name="Mohamed W."/>
            <person name="Mraheil M."/>
            <person name="Domann E."/>
            <person name="Schaffrath S."/>
            <person name="Karst U."/>
            <person name="Goesmann A."/>
            <person name="Oehm S."/>
            <person name="Puhler A."/>
            <person name="Merkl R."/>
            <person name="Vorwerk S."/>
            <person name="Glaser P."/>
            <person name="Garrido P."/>
            <person name="Rusniok C."/>
            <person name="Buchrieser C."/>
            <person name="Goebel W."/>
            <person name="Chakraborty T."/>
        </authorList>
    </citation>
    <scope>NUCLEOTIDE SEQUENCE [LARGE SCALE GENOMIC DNA]</scope>
    <source>
        <strain>CLIP80459</strain>
    </source>
</reference>
<keyword id="KW-0963">Cytoplasm</keyword>
<keyword id="KW-0328">Glycosyltransferase</keyword>
<keyword id="KW-0660">Purine salvage</keyword>
<keyword id="KW-0808">Transferase</keyword>
<feature type="chain" id="PRO_1000201669" description="Adenine phosphoribosyltransferase">
    <location>
        <begin position="1"/>
        <end position="173"/>
    </location>
</feature>